<accession>P03849</accession>
<geneLocation type="plasmid">
    <name>IncP-alpha RK2</name>
</geneLocation>
<proteinExistence type="predicted"/>
<dbReference type="EMBL" id="J01780">
    <property type="status" value="NOT_ANNOTATED_CDS"/>
    <property type="molecule type" value="Genomic_DNA"/>
</dbReference>
<keyword id="KW-0614">Plasmid</keyword>
<feature type="chain" id="PRO_0000068501" description="Uncharacterized 6.8 kDa protein in replication origin region">
    <location>
        <begin position="1"/>
        <end position="62"/>
    </location>
</feature>
<sequence length="62" mass="6805">MLDFLPVDSPSNVNRCAPHLSSLCPSSVKDRAPHLSVVAPLKCQYRRALIPRLVHIICGKLA</sequence>
<name>YPK6_ECOLX</name>
<organism>
    <name type="scientific">Escherichia coli</name>
    <dbReference type="NCBI Taxonomy" id="562"/>
    <lineage>
        <taxon>Bacteria</taxon>
        <taxon>Pseudomonadati</taxon>
        <taxon>Pseudomonadota</taxon>
        <taxon>Gammaproteobacteria</taxon>
        <taxon>Enterobacterales</taxon>
        <taxon>Enterobacteriaceae</taxon>
        <taxon>Escherichia</taxon>
    </lineage>
</organism>
<protein>
    <recommendedName>
        <fullName>Uncharacterized 6.8 kDa protein in replication origin region</fullName>
    </recommendedName>
</protein>
<reference key="1">
    <citation type="journal article" date="1981" name="Mol. Gen. Genet.">
        <title>Nucleotide sequence of the region of the origin of replication of the broad host range plasmid RK2.</title>
        <authorList>
            <person name="Stalker D.M."/>
            <person name="Thomas C.M."/>
            <person name="Helinski D.R."/>
        </authorList>
    </citation>
    <scope>NUCLEOTIDE SEQUENCE [GENOMIC DNA]</scope>
</reference>